<proteinExistence type="evidence at protein level"/>
<keyword id="KW-0067">ATP-binding</keyword>
<keyword id="KW-1003">Cell membrane</keyword>
<keyword id="KW-0325">Glycoprotein</keyword>
<keyword id="KW-0378">Hydrolase</keyword>
<keyword id="KW-0445">Lipid transport</keyword>
<keyword id="KW-0472">Membrane</keyword>
<keyword id="KW-0547">Nucleotide-binding</keyword>
<keyword id="KW-0597">Phosphoprotein</keyword>
<keyword id="KW-1185">Reference proteome</keyword>
<keyword id="KW-0677">Repeat</keyword>
<keyword id="KW-1278">Translocase</keyword>
<keyword id="KW-0812">Transmembrane</keyword>
<keyword id="KW-1133">Transmembrane helix</keyword>
<keyword id="KW-0813">Transport</keyword>
<reference key="1">
    <citation type="journal article" date="1996" name="Mol. Pharmacol.">
        <title>Structure and expression of the messenger RNA encoding the murine multidrug resistance protein, an ATP-binding cassette transporter.</title>
        <authorList>
            <person name="Stride B.D."/>
            <person name="Valdimarsson G."/>
            <person name="Gerlach J.H."/>
            <person name="Wilson G.M."/>
            <person name="Cole S.P.C."/>
            <person name="Deeley R.G."/>
        </authorList>
    </citation>
    <scope>NUCLEOTIDE SEQUENCE [MRNA]</scope>
    <source>
        <tissue>Muscle</tissue>
    </source>
</reference>
<reference key="2">
    <citation type="journal article" date="2005" name="Science">
        <title>The transcriptional landscape of the mammalian genome.</title>
        <authorList>
            <person name="Carninci P."/>
            <person name="Kasukawa T."/>
            <person name="Katayama S."/>
            <person name="Gough J."/>
            <person name="Frith M.C."/>
            <person name="Maeda N."/>
            <person name="Oyama R."/>
            <person name="Ravasi T."/>
            <person name="Lenhard B."/>
            <person name="Wells C."/>
            <person name="Kodzius R."/>
            <person name="Shimokawa K."/>
            <person name="Bajic V.B."/>
            <person name="Brenner S.E."/>
            <person name="Batalov S."/>
            <person name="Forrest A.R."/>
            <person name="Zavolan M."/>
            <person name="Davis M.J."/>
            <person name="Wilming L.G."/>
            <person name="Aidinis V."/>
            <person name="Allen J.E."/>
            <person name="Ambesi-Impiombato A."/>
            <person name="Apweiler R."/>
            <person name="Aturaliya R.N."/>
            <person name="Bailey T.L."/>
            <person name="Bansal M."/>
            <person name="Baxter L."/>
            <person name="Beisel K.W."/>
            <person name="Bersano T."/>
            <person name="Bono H."/>
            <person name="Chalk A.M."/>
            <person name="Chiu K.P."/>
            <person name="Choudhary V."/>
            <person name="Christoffels A."/>
            <person name="Clutterbuck D.R."/>
            <person name="Crowe M.L."/>
            <person name="Dalla E."/>
            <person name="Dalrymple B.P."/>
            <person name="de Bono B."/>
            <person name="Della Gatta G."/>
            <person name="di Bernardo D."/>
            <person name="Down T."/>
            <person name="Engstrom P."/>
            <person name="Fagiolini M."/>
            <person name="Faulkner G."/>
            <person name="Fletcher C.F."/>
            <person name="Fukushima T."/>
            <person name="Furuno M."/>
            <person name="Futaki S."/>
            <person name="Gariboldi M."/>
            <person name="Georgii-Hemming P."/>
            <person name="Gingeras T.R."/>
            <person name="Gojobori T."/>
            <person name="Green R.E."/>
            <person name="Gustincich S."/>
            <person name="Harbers M."/>
            <person name="Hayashi Y."/>
            <person name="Hensch T.K."/>
            <person name="Hirokawa N."/>
            <person name="Hill D."/>
            <person name="Huminiecki L."/>
            <person name="Iacono M."/>
            <person name="Ikeo K."/>
            <person name="Iwama A."/>
            <person name="Ishikawa T."/>
            <person name="Jakt M."/>
            <person name="Kanapin A."/>
            <person name="Katoh M."/>
            <person name="Kawasawa Y."/>
            <person name="Kelso J."/>
            <person name="Kitamura H."/>
            <person name="Kitano H."/>
            <person name="Kollias G."/>
            <person name="Krishnan S.P."/>
            <person name="Kruger A."/>
            <person name="Kummerfeld S.K."/>
            <person name="Kurochkin I.V."/>
            <person name="Lareau L.F."/>
            <person name="Lazarevic D."/>
            <person name="Lipovich L."/>
            <person name="Liu J."/>
            <person name="Liuni S."/>
            <person name="McWilliam S."/>
            <person name="Madan Babu M."/>
            <person name="Madera M."/>
            <person name="Marchionni L."/>
            <person name="Matsuda H."/>
            <person name="Matsuzawa S."/>
            <person name="Miki H."/>
            <person name="Mignone F."/>
            <person name="Miyake S."/>
            <person name="Morris K."/>
            <person name="Mottagui-Tabar S."/>
            <person name="Mulder N."/>
            <person name="Nakano N."/>
            <person name="Nakauchi H."/>
            <person name="Ng P."/>
            <person name="Nilsson R."/>
            <person name="Nishiguchi S."/>
            <person name="Nishikawa S."/>
            <person name="Nori F."/>
            <person name="Ohara O."/>
            <person name="Okazaki Y."/>
            <person name="Orlando V."/>
            <person name="Pang K.C."/>
            <person name="Pavan W.J."/>
            <person name="Pavesi G."/>
            <person name="Pesole G."/>
            <person name="Petrovsky N."/>
            <person name="Piazza S."/>
            <person name="Reed J."/>
            <person name="Reid J.F."/>
            <person name="Ring B.Z."/>
            <person name="Ringwald M."/>
            <person name="Rost B."/>
            <person name="Ruan Y."/>
            <person name="Salzberg S.L."/>
            <person name="Sandelin A."/>
            <person name="Schneider C."/>
            <person name="Schoenbach C."/>
            <person name="Sekiguchi K."/>
            <person name="Semple C.A."/>
            <person name="Seno S."/>
            <person name="Sessa L."/>
            <person name="Sheng Y."/>
            <person name="Shibata Y."/>
            <person name="Shimada H."/>
            <person name="Shimada K."/>
            <person name="Silva D."/>
            <person name="Sinclair B."/>
            <person name="Sperling S."/>
            <person name="Stupka E."/>
            <person name="Sugiura K."/>
            <person name="Sultana R."/>
            <person name="Takenaka Y."/>
            <person name="Taki K."/>
            <person name="Tammoja K."/>
            <person name="Tan S.L."/>
            <person name="Tang S."/>
            <person name="Taylor M.S."/>
            <person name="Tegner J."/>
            <person name="Teichmann S.A."/>
            <person name="Ueda H.R."/>
            <person name="van Nimwegen E."/>
            <person name="Verardo R."/>
            <person name="Wei C.L."/>
            <person name="Yagi K."/>
            <person name="Yamanishi H."/>
            <person name="Zabarovsky E."/>
            <person name="Zhu S."/>
            <person name="Zimmer A."/>
            <person name="Hide W."/>
            <person name="Bult C."/>
            <person name="Grimmond S.M."/>
            <person name="Teasdale R.D."/>
            <person name="Liu E.T."/>
            <person name="Brusic V."/>
            <person name="Quackenbush J."/>
            <person name="Wahlestedt C."/>
            <person name="Mattick J.S."/>
            <person name="Hume D.A."/>
            <person name="Kai C."/>
            <person name="Sasaki D."/>
            <person name="Tomaru Y."/>
            <person name="Fukuda S."/>
            <person name="Kanamori-Katayama M."/>
            <person name="Suzuki M."/>
            <person name="Aoki J."/>
            <person name="Arakawa T."/>
            <person name="Iida J."/>
            <person name="Imamura K."/>
            <person name="Itoh M."/>
            <person name="Kato T."/>
            <person name="Kawaji H."/>
            <person name="Kawagashira N."/>
            <person name="Kawashima T."/>
            <person name="Kojima M."/>
            <person name="Kondo S."/>
            <person name="Konno H."/>
            <person name="Nakano K."/>
            <person name="Ninomiya N."/>
            <person name="Nishio T."/>
            <person name="Okada M."/>
            <person name="Plessy C."/>
            <person name="Shibata K."/>
            <person name="Shiraki T."/>
            <person name="Suzuki S."/>
            <person name="Tagami M."/>
            <person name="Waki K."/>
            <person name="Watahiki A."/>
            <person name="Okamura-Oho Y."/>
            <person name="Suzuki H."/>
            <person name="Kawai J."/>
            <person name="Hayashizaki Y."/>
        </authorList>
    </citation>
    <scope>NUCLEOTIDE SEQUENCE [LARGE SCALE MRNA]</scope>
    <source>
        <strain>C57BL/6J</strain>
        <tissue>Testis</tissue>
    </source>
</reference>
<reference key="3">
    <citation type="journal article" date="1997" name="Mol. Pharmacol.">
        <title>Pharmacological characterization of the murine and human orthologs of multidrug-resistance protein in transfected human embryonic kidney cells.</title>
        <authorList>
            <person name="Stride B.D."/>
            <person name="Grant C.E."/>
            <person name="Loe D.W."/>
            <person name="Hipfner D.R."/>
            <person name="Cole S.P.C."/>
            <person name="Deeley R.G."/>
        </authorList>
    </citation>
    <scope>FUNCTION</scope>
    <scope>CATALYTIC ACTIVITY</scope>
    <scope>BIOPHYSICOCHEMICAL PROPERTIES</scope>
</reference>
<reference key="4">
    <citation type="journal article" date="1997" name="Nat. Med.">
        <title>Increased sensitivity to anticancer drugs and decreased inflammatory response in mice lacking the multidrug resistance-associated protein.</title>
        <authorList>
            <person name="Wijnholds J."/>
            <person name="Evers R."/>
            <person name="van Leusden M.R."/>
            <person name="Mol C.A."/>
            <person name="Zaman G.J."/>
            <person name="Mayer U."/>
            <person name="Beijnen J.H."/>
            <person name="van der Valk M."/>
            <person name="Krimpenfort P."/>
            <person name="Borst P."/>
        </authorList>
    </citation>
    <scope>DISRUPTION PHENOTYPE</scope>
    <scope>FUNCTION</scope>
    <scope>CATALYTIC ACTIVITY</scope>
    <scope>BIOPHYSICOCHEMICAL PROPERTIES</scope>
</reference>
<reference key="5">
    <citation type="journal article" date="2009" name="Immunity">
        <title>The phagosomal proteome in interferon-gamma-activated macrophages.</title>
        <authorList>
            <person name="Trost M."/>
            <person name="English L."/>
            <person name="Lemieux S."/>
            <person name="Courcelles M."/>
            <person name="Desjardins M."/>
            <person name="Thibault P."/>
        </authorList>
    </citation>
    <scope>PHOSPHORYLATION [LARGE SCALE ANALYSIS] AT SER-878 AND SER-882</scope>
    <scope>IDENTIFICATION BY MASS SPECTROMETRY [LARGE SCALE ANALYSIS]</scope>
</reference>
<reference key="6">
    <citation type="journal article" date="2010" name="Cell">
        <title>A tissue-specific atlas of mouse protein phosphorylation and expression.</title>
        <authorList>
            <person name="Huttlin E.L."/>
            <person name="Jedrychowski M.P."/>
            <person name="Elias J.E."/>
            <person name="Goswami T."/>
            <person name="Rad R."/>
            <person name="Beausoleil S.A."/>
            <person name="Villen J."/>
            <person name="Haas W."/>
            <person name="Sowa M.E."/>
            <person name="Gygi S.P."/>
        </authorList>
    </citation>
    <scope>PHOSPHORYLATION [LARGE SCALE ANALYSIS] AT TYR-277; SER-290; SER-878 AND SER-882</scope>
    <scope>IDENTIFICATION BY MASS SPECTROMETRY [LARGE SCALE ANALYSIS]</scope>
    <source>
        <tissue>Brain</tissue>
        <tissue>Brown adipose tissue</tissue>
        <tissue>Heart</tissue>
        <tissue>Kidney</tissue>
        <tissue>Lung</tissue>
        <tissue>Pancreas</tissue>
        <tissue>Spleen</tissue>
        <tissue>Testis</tissue>
    </source>
</reference>
<reference key="7">
    <citation type="journal article" date="2013" name="Mol. Cell">
        <title>SIRT5-mediated lysine desuccinylation impacts diverse metabolic pathways.</title>
        <authorList>
            <person name="Park J."/>
            <person name="Chen Y."/>
            <person name="Tishkoff D.X."/>
            <person name="Peng C."/>
            <person name="Tan M."/>
            <person name="Dai L."/>
            <person name="Xie Z."/>
            <person name="Zhang Y."/>
            <person name="Zwaans B.M."/>
            <person name="Skinner M.E."/>
            <person name="Lombard D.B."/>
            <person name="Zhao Y."/>
        </authorList>
    </citation>
    <scope>SUCCINYLATION [LARGE SCALE ANALYSIS] AT LYS-504</scope>
    <scope>IDENTIFICATION BY MASS SPECTROMETRY [LARGE SCALE ANALYSIS]</scope>
    <source>
        <tissue>Liver</tissue>
    </source>
</reference>
<reference key="8">
    <citation type="journal article" date="2021" name="Sci. Immunol.">
        <title>Abcc1 and Ggt5 support lymphocyte guidance through export and catabolism of S-geranylgeranyl-l-glutathione.</title>
        <authorList>
            <person name="Gallman A.E."/>
            <person name="Wolfreys F.D."/>
            <person name="Nguyen D.N."/>
            <person name="Sandy M."/>
            <person name="Xu Y."/>
            <person name="An J."/>
            <person name="Li Z."/>
            <person name="Marson A."/>
            <person name="Lu E."/>
            <person name="Cyster J.G."/>
        </authorList>
    </citation>
    <scope>FUNCTION</scope>
    <scope>TRANSPORTER ACTIVITY</scope>
</reference>
<reference key="9">
    <citation type="journal article" date="2022" name="Immunity">
        <title>ABCC1 transporter exports the immunostimulatory cyclic dinucleotide cGAMP.</title>
        <authorList>
            <person name="Maltbaek J.H."/>
            <person name="Cambier S."/>
            <person name="Snyder J.M."/>
            <person name="Stetson D.B."/>
        </authorList>
    </citation>
    <scope>FUNCTION</scope>
    <scope>TRANSPORTER ACTIVITY</scope>
</reference>
<protein>
    <recommendedName>
        <fullName evidence="11">Multidrug resistance-associated protein 1</fullName>
        <ecNumber evidence="9">7.6.2.2</ecNumber>
    </recommendedName>
    <alternativeName>
        <fullName>ATP-binding cassette sub-family C member 1</fullName>
    </alternativeName>
    <alternativeName>
        <fullName evidence="11">Glutathione-S-conjugate-translocating ATPase ABCC1</fullName>
        <ecNumber evidence="10">7.6.2.3</ecNumber>
    </alternativeName>
    <alternativeName>
        <fullName>Leukotriene C(4) transporter</fullName>
        <shortName>LTC4 transporter</shortName>
    </alternativeName>
</protein>
<sequence length="1528" mass="171185">MALRSFCSADGSDPLWDWNVTWHTSNPDFTKCFQNTVLTWVPCFYLWSCFPLYFFYLSRHDRGYIQMTHLNKTKTALGFFLWIICWADLFYSFWERSQGVLRAPVLLVSPTLLGITMLLATFLIQLERRKGVQSSGIMLTFWLVALLCALAILRSKIISALKKDAHVDVFRDSTFYLYFTLVLVQLVLSCFSDCSPLFSETVHDRNPCPESSASFLSRITFWWITGMMVHGYRQPLESSDLWSLNKEDTSEEVVPVLVNNWKKECDKSRKQPVRIVYAPPKDPSKPKGSSQLDVNEEVEALIVKSPHKDREPSLFKVLYKTFGPYFLMSFLYKALHDLMMFAGPKILELIINFVNDREAPDWQGYFYTALLFVSACLQTLALHQYFHICFVSGMRIKTAVVGAVYRKALLITNAARKSSTVGEIVNLMSVDAQRFMDLATYINMIWSAPLQVILALYFLWLSLGPSVLAGVAVMILMVPLNAVMAMKTKTYQVAHMKSKDNRIKLMNEILNGIKVLKLYAWELAFQDKVMSIRQEELKVLKKSAYLAAVGTFTWVCTPFLVALSTFAVFVTVDERNILDAKKAFVSLALFNILRFPLNILPMVISSIVQASVSLKRLRIFLSHEELEPDSIERRSIKSGEGNSITVKNATFTWARGEPPTLNGITFSIPEGALVAVVGQVGCGKSSLLSALLAEMDKVEGHVTLKGSVAYVPQQAWIQNDSLRENILFGHPLQENYYKAVMEACALLPDLEILPSGDRTEIGEKGVNLSGGQKQRVSLARAVYSNSDIYLFDDPLSAVDAHVGKHIFEKVVGPMGLLKNKTRILVTHGISYLPQVDVIIVMSGGKISEMGSYQELLDRDGAFAEFLRTYANAEQDLASEDDSVSGSGKESKPVENGMLVTDTVGKHLQRHLSNSSSHSGDTSQQHSSIAELQKAGAKEETWKLMEADKAQTGQVQLSVYWNYMKAIGLFITFLSIFLFLCNHVSALASNYWLSLWTDDPPVVNGTQANRNFRLSVYGALGILQGAAIFGYSMAVSIGGIFASRRLHLDLLYNVLRSPMSFFERTPSGNLVNRFSKELDTVDSMIPQVIKMFMGSLFSVIGAVIIILLATPIAAVIIPPLGLVYFFVQRFYVASSRQLKRLESVSRSPVYSHFNETLLGVSVIRAFEEQERFIHQSDLKVDENQKAYYPSIVANRWLAVRLECVGNCIVLFAALFAVISRHSLSAGLVGLSVSYSLQITAYLNWLVRMSSEMETNIVAVERLKEYSETEKEAPWQIQETAPPSTWPHSGRVEFRDYCLRYREDLDLVLKHINVTIEGGEKVGIVGRTGAGKSSLTLGLFRINESAEGEIIIDGVNIAKIGLHNLRFKITIIPQDPVLFSGSLRMNLDPFSQYSDEEVWMALELAHLKGFVSALPDKLNHECAEGGENLSVGQRQLVCLARALLRKTKILVLDEATAAVDLETDNLIQSTIRTQFEDCTVLTIAHRLNTIMDYTRVIVLDKGEVRECGAPSELLQQRGIFYSMAKDAGLV</sequence>
<gene>
    <name evidence="13" type="primary">Abcc1</name>
    <name type="synonym">Abcc1a</name>
    <name type="synonym">Abcc1b</name>
    <name type="synonym">Mdrap</name>
    <name type="synonym">Mrp</name>
</gene>
<feature type="chain" id="PRO_0000093353" description="Multidrug resistance-associated protein 1">
    <location>
        <begin position="1"/>
        <end position="1528"/>
    </location>
</feature>
<feature type="topological domain" description="Extracellular" evidence="1">
    <location>
        <begin position="1"/>
        <end position="33"/>
    </location>
</feature>
<feature type="transmembrane region" description="Helical; Name=1" evidence="5">
    <location>
        <begin position="34"/>
        <end position="54"/>
    </location>
</feature>
<feature type="topological domain" description="Cytoplasmic" evidence="1">
    <location>
        <begin position="55"/>
        <end position="74"/>
    </location>
</feature>
<feature type="transmembrane region" description="Helical; Name=2" evidence="5">
    <location>
        <begin position="75"/>
        <end position="95"/>
    </location>
</feature>
<feature type="topological domain" description="Extracellular" evidence="1">
    <location>
        <begin position="96"/>
        <end position="100"/>
    </location>
</feature>
<feature type="transmembrane region" description="Helical; Name=3" evidence="5">
    <location>
        <begin position="101"/>
        <end position="121"/>
    </location>
</feature>
<feature type="topological domain" description="Cytoplasmic" evidence="1">
    <location>
        <begin position="122"/>
        <end position="133"/>
    </location>
</feature>
<feature type="transmembrane region" description="Helical; Name=4" evidence="5">
    <location>
        <begin position="134"/>
        <end position="154"/>
    </location>
</feature>
<feature type="topological domain" description="Extracellular" evidence="1">
    <location>
        <begin position="155"/>
        <end position="172"/>
    </location>
</feature>
<feature type="transmembrane region" description="Helical; Name=5" evidence="5">
    <location>
        <begin position="173"/>
        <end position="193"/>
    </location>
</feature>
<feature type="topological domain" description="Cytoplasmic" evidence="1">
    <location>
        <begin position="194"/>
        <end position="317"/>
    </location>
</feature>
<feature type="transmembrane region" description="Helical; Name=6" evidence="5">
    <location>
        <begin position="318"/>
        <end position="338"/>
    </location>
</feature>
<feature type="topological domain" description="Extracellular" evidence="1">
    <location>
        <begin position="339"/>
        <end position="364"/>
    </location>
</feature>
<feature type="transmembrane region" description="Helical; Name=7" evidence="5">
    <location>
        <begin position="365"/>
        <end position="385"/>
    </location>
</feature>
<feature type="topological domain" description="Cytoplasmic" evidence="1">
    <location>
        <begin position="386"/>
        <end position="441"/>
    </location>
</feature>
<feature type="transmembrane region" description="Helical; Name=8" evidence="5">
    <location>
        <begin position="442"/>
        <end position="462"/>
    </location>
</feature>
<feature type="topological domain" description="Extracellular" evidence="1">
    <location>
        <begin position="463"/>
        <end position="465"/>
    </location>
</feature>
<feature type="transmembrane region" description="Helical; Name=9" evidence="5">
    <location>
        <begin position="466"/>
        <end position="486"/>
    </location>
</feature>
<feature type="topological domain" description="Cytoplasmic" evidence="1">
    <location>
        <begin position="487"/>
        <end position="548"/>
    </location>
</feature>
<feature type="transmembrane region" description="Helical; Name=10" evidence="5">
    <location>
        <begin position="549"/>
        <end position="569"/>
    </location>
</feature>
<feature type="topological domain" description="Extracellular" evidence="1">
    <location>
        <begin position="570"/>
        <end position="591"/>
    </location>
</feature>
<feature type="transmembrane region" description="Helical; Name=11" evidence="5">
    <location>
        <begin position="592"/>
        <end position="612"/>
    </location>
</feature>
<feature type="topological domain" description="Cytoplasmic" evidence="1">
    <location>
        <begin position="613"/>
        <end position="963"/>
    </location>
</feature>
<feature type="transmembrane region" description="Helical; Name=12" evidence="5">
    <location>
        <begin position="964"/>
        <end position="984"/>
    </location>
</feature>
<feature type="topological domain" description="Extracellular" evidence="1">
    <location>
        <begin position="985"/>
        <end position="1022"/>
    </location>
</feature>
<feature type="transmembrane region" description="Helical; Name=13" evidence="5">
    <location>
        <begin position="1023"/>
        <end position="1043"/>
    </location>
</feature>
<feature type="topological domain" description="Cytoplasmic" evidence="1">
    <location>
        <begin position="1044"/>
        <end position="1086"/>
    </location>
</feature>
<feature type="transmembrane region" description="Helical; Name=14" evidence="5">
    <location>
        <begin position="1087"/>
        <end position="1107"/>
    </location>
</feature>
<feature type="topological domain" description="Extracellular" evidence="1">
    <location>
        <position position="1108"/>
    </location>
</feature>
<feature type="transmembrane region" description="Helical; Name=15" evidence="5">
    <location>
        <begin position="1109"/>
        <end position="1129"/>
    </location>
</feature>
<feature type="topological domain" description="Cytoplasmic" evidence="1">
    <location>
        <begin position="1130"/>
        <end position="1200"/>
    </location>
</feature>
<feature type="transmembrane region" description="Helical; Name=16" evidence="5">
    <location>
        <begin position="1201"/>
        <end position="1221"/>
    </location>
</feature>
<feature type="topological domain" description="Extracellular" evidence="1">
    <location>
        <begin position="1222"/>
        <end position="1223"/>
    </location>
</feature>
<feature type="transmembrane region" description="Helical; Name=17" evidence="5">
    <location>
        <begin position="1224"/>
        <end position="1244"/>
    </location>
</feature>
<feature type="topological domain" description="Cytoplasmic" evidence="1">
    <location>
        <begin position="1245"/>
        <end position="1528"/>
    </location>
</feature>
<feature type="domain" description="ABC transmembrane type-1 1" evidence="5">
    <location>
        <begin position="326"/>
        <end position="609"/>
    </location>
</feature>
<feature type="domain" description="ABC transporter 1" evidence="4">
    <location>
        <begin position="644"/>
        <end position="868"/>
    </location>
</feature>
<feature type="domain" description="ABC transmembrane type-1 2" evidence="5">
    <location>
        <begin position="971"/>
        <end position="1253"/>
    </location>
</feature>
<feature type="domain" description="ABC transporter 2" evidence="4">
    <location>
        <begin position="1290"/>
        <end position="1524"/>
    </location>
</feature>
<feature type="region of interest" description="Disordered" evidence="6">
    <location>
        <begin position="876"/>
        <end position="895"/>
    </location>
</feature>
<feature type="region of interest" description="Disordered" evidence="6">
    <location>
        <begin position="909"/>
        <end position="929"/>
    </location>
</feature>
<feature type="compositionally biased region" description="Polar residues" evidence="6">
    <location>
        <begin position="910"/>
        <end position="929"/>
    </location>
</feature>
<feature type="binding site" evidence="4">
    <location>
        <begin position="678"/>
        <end position="685"/>
    </location>
    <ligand>
        <name>ATP</name>
        <dbReference type="ChEBI" id="CHEBI:30616"/>
        <label>1</label>
    </ligand>
</feature>
<feature type="binding site" evidence="4">
    <location>
        <begin position="1324"/>
        <end position="1331"/>
    </location>
    <ligand>
        <name>ATP</name>
        <dbReference type="ChEBI" id="CHEBI:30616"/>
        <label>2</label>
    </ligand>
</feature>
<feature type="modified residue" description="Phosphotyrosine" evidence="15">
    <location>
        <position position="277"/>
    </location>
</feature>
<feature type="modified residue" description="Phosphoserine" evidence="15">
    <location>
        <position position="290"/>
    </location>
</feature>
<feature type="modified residue" description="N6-succinyllysine" evidence="16">
    <location>
        <position position="504"/>
    </location>
</feature>
<feature type="modified residue" description="Phosphoserine" evidence="14 15">
    <location>
        <position position="878"/>
    </location>
</feature>
<feature type="modified residue" description="Phosphoserine" evidence="14 15">
    <location>
        <position position="882"/>
    </location>
</feature>
<feature type="modified residue" description="Phosphoserine" evidence="2">
    <location>
        <position position="912"/>
    </location>
</feature>
<feature type="modified residue" description="Phosphoserine" evidence="2">
    <location>
        <position position="927"/>
    </location>
</feature>
<feature type="glycosylation site" description="N-linked (GlcNAc...) asparagine" evidence="3">
    <location>
        <position position="19"/>
    </location>
</feature>
<feature type="glycosylation site" description="N-linked (GlcNAc...) asparagine" evidence="3">
    <location>
        <position position="1003"/>
    </location>
</feature>
<evidence type="ECO:0000250" key="1"/>
<evidence type="ECO:0000250" key="2">
    <source>
        <dbReference type="UniProtKB" id="P33527"/>
    </source>
</evidence>
<evidence type="ECO:0000255" key="3"/>
<evidence type="ECO:0000255" key="4">
    <source>
        <dbReference type="PROSITE-ProRule" id="PRU00434"/>
    </source>
</evidence>
<evidence type="ECO:0000255" key="5">
    <source>
        <dbReference type="PROSITE-ProRule" id="PRU00441"/>
    </source>
</evidence>
<evidence type="ECO:0000256" key="6">
    <source>
        <dbReference type="SAM" id="MobiDB-lite"/>
    </source>
</evidence>
<evidence type="ECO:0000269" key="7">
    <source>
    </source>
</evidence>
<evidence type="ECO:0000269" key="8">
    <source>
    </source>
</evidence>
<evidence type="ECO:0000269" key="9">
    <source>
    </source>
</evidence>
<evidence type="ECO:0000269" key="10">
    <source>
    </source>
</evidence>
<evidence type="ECO:0000305" key="11"/>
<evidence type="ECO:0000305" key="12">
    <source>
    </source>
</evidence>
<evidence type="ECO:0000312" key="13">
    <source>
        <dbReference type="MGI" id="MGI:102676"/>
    </source>
</evidence>
<evidence type="ECO:0007744" key="14">
    <source>
    </source>
</evidence>
<evidence type="ECO:0007744" key="15">
    <source>
    </source>
</evidence>
<evidence type="ECO:0007744" key="16">
    <source>
    </source>
</evidence>
<name>MRP1_MOUSE</name>
<organism>
    <name type="scientific">Mus musculus</name>
    <name type="common">Mouse</name>
    <dbReference type="NCBI Taxonomy" id="10090"/>
    <lineage>
        <taxon>Eukaryota</taxon>
        <taxon>Metazoa</taxon>
        <taxon>Chordata</taxon>
        <taxon>Craniata</taxon>
        <taxon>Vertebrata</taxon>
        <taxon>Euteleostomi</taxon>
        <taxon>Mammalia</taxon>
        <taxon>Eutheria</taxon>
        <taxon>Euarchontoglires</taxon>
        <taxon>Glires</taxon>
        <taxon>Rodentia</taxon>
        <taxon>Myomorpha</taxon>
        <taxon>Muroidea</taxon>
        <taxon>Muridae</taxon>
        <taxon>Murinae</taxon>
        <taxon>Mus</taxon>
        <taxon>Mus</taxon>
    </lineage>
</organism>
<dbReference type="EC" id="7.6.2.2" evidence="9"/>
<dbReference type="EC" id="7.6.2.3" evidence="10"/>
<dbReference type="EMBL" id="AF022908">
    <property type="protein sequence ID" value="AAB80938.1"/>
    <property type="molecule type" value="mRNA"/>
</dbReference>
<dbReference type="EMBL" id="AK029876">
    <property type="protein sequence ID" value="BAC26654.1"/>
    <property type="molecule type" value="mRNA"/>
</dbReference>
<dbReference type="CCDS" id="CCDS37264.1"/>
<dbReference type="RefSeq" id="NP_032602.1">
    <property type="nucleotide sequence ID" value="NM_008576.4"/>
</dbReference>
<dbReference type="SMR" id="O35379"/>
<dbReference type="BioGRID" id="201374">
    <property type="interactions" value="8"/>
</dbReference>
<dbReference type="FunCoup" id="O35379">
    <property type="interactions" value="1147"/>
</dbReference>
<dbReference type="STRING" id="10090.ENSMUSP00000097743"/>
<dbReference type="BindingDB" id="O35379"/>
<dbReference type="ChEMBL" id="CHEMBL2532"/>
<dbReference type="SwissLipids" id="SLP:000000463"/>
<dbReference type="GlyCosmos" id="O35379">
    <property type="glycosylation" value="2 sites, No reported glycans"/>
</dbReference>
<dbReference type="GlyGen" id="O35379">
    <property type="glycosylation" value="2 sites"/>
</dbReference>
<dbReference type="iPTMnet" id="O35379"/>
<dbReference type="PhosphoSitePlus" id="O35379"/>
<dbReference type="SwissPalm" id="O35379"/>
<dbReference type="jPOST" id="O35379"/>
<dbReference type="PaxDb" id="10090-ENSMUSP00000097743"/>
<dbReference type="ProteomicsDB" id="291409"/>
<dbReference type="Pumba" id="O35379"/>
<dbReference type="Antibodypedia" id="4235">
    <property type="antibodies" value="591 antibodies from 49 providers"/>
</dbReference>
<dbReference type="DNASU" id="17250"/>
<dbReference type="Ensembl" id="ENSMUST00000100167.10">
    <property type="protein sequence ID" value="ENSMUSP00000097743.4"/>
    <property type="gene ID" value="ENSMUSG00000023088.18"/>
</dbReference>
<dbReference type="GeneID" id="17250"/>
<dbReference type="KEGG" id="mmu:17250"/>
<dbReference type="UCSC" id="uc007yhj.2">
    <property type="organism name" value="mouse"/>
</dbReference>
<dbReference type="AGR" id="MGI:102676"/>
<dbReference type="CTD" id="4363"/>
<dbReference type="MGI" id="MGI:102676">
    <property type="gene designation" value="Abcc1"/>
</dbReference>
<dbReference type="VEuPathDB" id="HostDB:ENSMUSG00000023088"/>
<dbReference type="eggNOG" id="KOG0054">
    <property type="taxonomic scope" value="Eukaryota"/>
</dbReference>
<dbReference type="GeneTree" id="ENSGT00940000160271"/>
<dbReference type="HOGENOM" id="CLU_000604_27_3_1"/>
<dbReference type="InParanoid" id="O35379"/>
<dbReference type="OMA" id="CFETGMR"/>
<dbReference type="OrthoDB" id="6500128at2759"/>
<dbReference type="PhylomeDB" id="O35379"/>
<dbReference type="TreeFam" id="TF105199"/>
<dbReference type="Reactome" id="R-MMU-1660661">
    <property type="pathway name" value="Sphingolipid de novo biosynthesis"/>
</dbReference>
<dbReference type="Reactome" id="R-MMU-189483">
    <property type="pathway name" value="Heme degradation"/>
</dbReference>
<dbReference type="Reactome" id="R-MMU-2142691">
    <property type="pathway name" value="Synthesis of Leukotrienes (LT) and Eoxins (EX)"/>
</dbReference>
<dbReference type="Reactome" id="R-MMU-382556">
    <property type="pathway name" value="ABC-family proteins mediated transport"/>
</dbReference>
<dbReference type="Reactome" id="R-MMU-9707564">
    <property type="pathway name" value="Cytoprotection by HMOX1"/>
</dbReference>
<dbReference type="Reactome" id="R-MMU-9753281">
    <property type="pathway name" value="Paracetamol ADME"/>
</dbReference>
<dbReference type="Reactome" id="R-MMU-9758890">
    <property type="pathway name" value="Transport of RCbl within the body"/>
</dbReference>
<dbReference type="BioGRID-ORCS" id="17250">
    <property type="hits" value="9 hits in 84 CRISPR screens"/>
</dbReference>
<dbReference type="ChiTaRS" id="Abcc1">
    <property type="organism name" value="mouse"/>
</dbReference>
<dbReference type="PRO" id="PR:O35379"/>
<dbReference type="Proteomes" id="UP000000589">
    <property type="component" value="Chromosome 16"/>
</dbReference>
<dbReference type="RNAct" id="O35379">
    <property type="molecule type" value="protein"/>
</dbReference>
<dbReference type="Bgee" id="ENSMUSG00000023088">
    <property type="expression patterns" value="Expressed in stroma of bone marrow and 247 other cell types or tissues"/>
</dbReference>
<dbReference type="ExpressionAtlas" id="O35379">
    <property type="expression patterns" value="baseline and differential"/>
</dbReference>
<dbReference type="GO" id="GO:0016324">
    <property type="term" value="C:apical plasma membrane"/>
    <property type="evidence" value="ECO:0007669"/>
    <property type="project" value="Ensembl"/>
</dbReference>
<dbReference type="GO" id="GO:0009925">
    <property type="term" value="C:basal plasma membrane"/>
    <property type="evidence" value="ECO:0000315"/>
    <property type="project" value="MGI"/>
</dbReference>
<dbReference type="GO" id="GO:0016323">
    <property type="term" value="C:basolateral plasma membrane"/>
    <property type="evidence" value="ECO:0007669"/>
    <property type="project" value="UniProtKB-SubCell"/>
</dbReference>
<dbReference type="GO" id="GO:0016328">
    <property type="term" value="C:lateral plasma membrane"/>
    <property type="evidence" value="ECO:0007669"/>
    <property type="project" value="Ensembl"/>
</dbReference>
<dbReference type="GO" id="GO:0005886">
    <property type="term" value="C:plasma membrane"/>
    <property type="evidence" value="ECO:0000314"/>
    <property type="project" value="MGI"/>
</dbReference>
<dbReference type="GO" id="GO:0015431">
    <property type="term" value="F:ABC-type glutathione S-conjugate transporter activity"/>
    <property type="evidence" value="ECO:0000315"/>
    <property type="project" value="UniProtKB"/>
</dbReference>
<dbReference type="GO" id="GO:0140359">
    <property type="term" value="F:ABC-type transporter activity"/>
    <property type="evidence" value="ECO:0000250"/>
    <property type="project" value="UniProtKB"/>
</dbReference>
<dbReference type="GO" id="GO:0015420">
    <property type="term" value="F:ABC-type vitamin B12 transporter activity"/>
    <property type="evidence" value="ECO:0000315"/>
    <property type="project" value="MGI"/>
</dbReference>
<dbReference type="GO" id="GO:0008559">
    <property type="term" value="F:ABC-type xenobiotic transporter activity"/>
    <property type="evidence" value="ECO:0007669"/>
    <property type="project" value="UniProtKB-EC"/>
</dbReference>
<dbReference type="GO" id="GO:0005524">
    <property type="term" value="F:ATP binding"/>
    <property type="evidence" value="ECO:0007669"/>
    <property type="project" value="UniProtKB-KW"/>
</dbReference>
<dbReference type="GO" id="GO:0016887">
    <property type="term" value="F:ATP hydrolysis activity"/>
    <property type="evidence" value="ECO:0007669"/>
    <property type="project" value="InterPro"/>
</dbReference>
<dbReference type="GO" id="GO:0034040">
    <property type="term" value="F:ATPase-coupled lipid transmembrane transporter activity"/>
    <property type="evidence" value="ECO:0007669"/>
    <property type="project" value="Ensembl"/>
</dbReference>
<dbReference type="GO" id="GO:0015562">
    <property type="term" value="F:efflux transmembrane transporter activity"/>
    <property type="evidence" value="ECO:0000315"/>
    <property type="project" value="ARUK-UCL"/>
</dbReference>
<dbReference type="GO" id="GO:0034634">
    <property type="term" value="F:glutathione transmembrane transporter activity"/>
    <property type="evidence" value="ECO:0000315"/>
    <property type="project" value="ARUK-UCL"/>
</dbReference>
<dbReference type="GO" id="GO:0005324">
    <property type="term" value="F:long-chain fatty acid transmembrane transporter activity"/>
    <property type="evidence" value="ECO:0007669"/>
    <property type="project" value="Ensembl"/>
</dbReference>
<dbReference type="GO" id="GO:0042910">
    <property type="term" value="F:xenobiotic transmembrane transporter activity"/>
    <property type="evidence" value="ECO:0000315"/>
    <property type="project" value="ARUK-UCL"/>
</dbReference>
<dbReference type="GO" id="GO:0048708">
    <property type="term" value="P:astrocyte differentiation"/>
    <property type="evidence" value="ECO:0007669"/>
    <property type="project" value="Ensembl"/>
</dbReference>
<dbReference type="GO" id="GO:0060326">
    <property type="term" value="P:cell chemotaxis"/>
    <property type="evidence" value="ECO:0007669"/>
    <property type="project" value="Ensembl"/>
</dbReference>
<dbReference type="GO" id="GO:1904646">
    <property type="term" value="P:cellular response to amyloid-beta"/>
    <property type="evidence" value="ECO:0000315"/>
    <property type="project" value="ARUK-UCL"/>
</dbReference>
<dbReference type="GO" id="GO:0015889">
    <property type="term" value="P:cobalamin transport"/>
    <property type="evidence" value="ECO:0000315"/>
    <property type="project" value="MGI"/>
</dbReference>
<dbReference type="GO" id="GO:0070729">
    <property type="term" value="P:cyclic nucleotide transport"/>
    <property type="evidence" value="ECO:0000315"/>
    <property type="project" value="UniProtKB"/>
</dbReference>
<dbReference type="GO" id="GO:0140115">
    <property type="term" value="P:export across plasma membrane"/>
    <property type="evidence" value="ECO:0000315"/>
    <property type="project" value="ARUK-UCL"/>
</dbReference>
<dbReference type="GO" id="GO:0071716">
    <property type="term" value="P:leukotriene transport"/>
    <property type="evidence" value="ECO:0000315"/>
    <property type="project" value="UniProtKB"/>
</dbReference>
<dbReference type="GO" id="GO:0015911">
    <property type="term" value="P:long-chain fatty acid import across plasma membrane"/>
    <property type="evidence" value="ECO:0007669"/>
    <property type="project" value="Ensembl"/>
</dbReference>
<dbReference type="GO" id="GO:0033700">
    <property type="term" value="P:phospholipid efflux"/>
    <property type="evidence" value="ECO:0007669"/>
    <property type="project" value="Ensembl"/>
</dbReference>
<dbReference type="GO" id="GO:0045332">
    <property type="term" value="P:phospholipid translocation"/>
    <property type="evidence" value="ECO:0007669"/>
    <property type="project" value="Ensembl"/>
</dbReference>
<dbReference type="GO" id="GO:0030335">
    <property type="term" value="P:positive regulation of cell migration"/>
    <property type="evidence" value="ECO:0007669"/>
    <property type="project" value="Ensembl"/>
</dbReference>
<dbReference type="GO" id="GO:0050729">
    <property type="term" value="P:positive regulation of inflammatory response"/>
    <property type="evidence" value="ECO:0000315"/>
    <property type="project" value="UniProtKB"/>
</dbReference>
<dbReference type="GO" id="GO:2001038">
    <property type="term" value="P:regulation of cellular response to drug"/>
    <property type="evidence" value="ECO:0007669"/>
    <property type="project" value="Ensembl"/>
</dbReference>
<dbReference type="GO" id="GO:0006979">
    <property type="term" value="P:response to oxidative stress"/>
    <property type="evidence" value="ECO:0007669"/>
    <property type="project" value="Ensembl"/>
</dbReference>
<dbReference type="GO" id="GO:0009410">
    <property type="term" value="P:response to xenobiotic stimulus"/>
    <property type="evidence" value="ECO:0000315"/>
    <property type="project" value="UniProtKB"/>
</dbReference>
<dbReference type="GO" id="GO:0099039">
    <property type="term" value="P:sphingolipid translocation"/>
    <property type="evidence" value="ECO:0007669"/>
    <property type="project" value="Ensembl"/>
</dbReference>
<dbReference type="GO" id="GO:0070633">
    <property type="term" value="P:transepithelial transport"/>
    <property type="evidence" value="ECO:0007669"/>
    <property type="project" value="Ensembl"/>
</dbReference>
<dbReference type="GO" id="GO:1990961">
    <property type="term" value="P:xenobiotic detoxification by transmembrane export across the plasma membrane"/>
    <property type="evidence" value="ECO:0007669"/>
    <property type="project" value="Ensembl"/>
</dbReference>
<dbReference type="GO" id="GO:0042908">
    <property type="term" value="P:xenobiotic transport"/>
    <property type="evidence" value="ECO:0000315"/>
    <property type="project" value="ARUK-UCL"/>
</dbReference>
<dbReference type="GO" id="GO:1990962">
    <property type="term" value="P:xenobiotic transport across blood-brain barrier"/>
    <property type="evidence" value="ECO:0007669"/>
    <property type="project" value="Ensembl"/>
</dbReference>
<dbReference type="CDD" id="cd18595">
    <property type="entry name" value="ABC_6TM_MRP1_2_3_6_D1_like"/>
    <property type="match status" value="1"/>
</dbReference>
<dbReference type="CDD" id="cd18603">
    <property type="entry name" value="ABC_6TM_MRP1_2_3_6_D2_like"/>
    <property type="match status" value="1"/>
</dbReference>
<dbReference type="CDD" id="cd03250">
    <property type="entry name" value="ABCC_MRP_domain1"/>
    <property type="match status" value="1"/>
</dbReference>
<dbReference type="CDD" id="cd03244">
    <property type="entry name" value="ABCC_MRP_domain2"/>
    <property type="match status" value="1"/>
</dbReference>
<dbReference type="FunFam" id="3.40.50.300:FF:000293">
    <property type="entry name" value="ATP binding cassette subfamily C member 1"/>
    <property type="match status" value="1"/>
</dbReference>
<dbReference type="FunFam" id="1.20.1560.10:FF:000001">
    <property type="entry name" value="ATP-binding cassette subfamily C member 1"/>
    <property type="match status" value="1"/>
</dbReference>
<dbReference type="FunFam" id="1.20.1560.10:FF:000007">
    <property type="entry name" value="ATP-binding cassette subfamily C member 1"/>
    <property type="match status" value="1"/>
</dbReference>
<dbReference type="FunFam" id="3.40.50.300:FF:000074">
    <property type="entry name" value="Multidrug resistance-associated protein 5 isoform 1"/>
    <property type="match status" value="1"/>
</dbReference>
<dbReference type="Gene3D" id="1.20.1560.10">
    <property type="entry name" value="ABC transporter type 1, transmembrane domain"/>
    <property type="match status" value="2"/>
</dbReference>
<dbReference type="Gene3D" id="3.40.50.300">
    <property type="entry name" value="P-loop containing nucleotide triphosphate hydrolases"/>
    <property type="match status" value="2"/>
</dbReference>
<dbReference type="InterPro" id="IPR003593">
    <property type="entry name" value="AAA+_ATPase"/>
</dbReference>
<dbReference type="InterPro" id="IPR011527">
    <property type="entry name" value="ABC1_TM_dom"/>
</dbReference>
<dbReference type="InterPro" id="IPR036640">
    <property type="entry name" value="ABC1_TM_sf"/>
</dbReference>
<dbReference type="InterPro" id="IPR003439">
    <property type="entry name" value="ABC_transporter-like_ATP-bd"/>
</dbReference>
<dbReference type="InterPro" id="IPR017871">
    <property type="entry name" value="ABC_transporter-like_CS"/>
</dbReference>
<dbReference type="InterPro" id="IPR050173">
    <property type="entry name" value="ABC_transporter_C-like"/>
</dbReference>
<dbReference type="InterPro" id="IPR005292">
    <property type="entry name" value="MRP"/>
</dbReference>
<dbReference type="InterPro" id="IPR027417">
    <property type="entry name" value="P-loop_NTPase"/>
</dbReference>
<dbReference type="InterPro" id="IPR056227">
    <property type="entry name" value="TMD0_ABC"/>
</dbReference>
<dbReference type="NCBIfam" id="TIGR00957">
    <property type="entry name" value="MRP_assoc_pro"/>
    <property type="match status" value="1"/>
</dbReference>
<dbReference type="PANTHER" id="PTHR24223">
    <property type="entry name" value="ATP-BINDING CASSETTE SUB-FAMILY C"/>
    <property type="match status" value="1"/>
</dbReference>
<dbReference type="PANTHER" id="PTHR24223:SF241">
    <property type="entry name" value="MULTIDRUG RESISTANCE-ASSOCIATED PROTEIN 1"/>
    <property type="match status" value="1"/>
</dbReference>
<dbReference type="Pfam" id="PF00664">
    <property type="entry name" value="ABC_membrane"/>
    <property type="match status" value="2"/>
</dbReference>
<dbReference type="Pfam" id="PF00005">
    <property type="entry name" value="ABC_tran"/>
    <property type="match status" value="2"/>
</dbReference>
<dbReference type="Pfam" id="PF24357">
    <property type="entry name" value="TMD0_ABC"/>
    <property type="match status" value="1"/>
</dbReference>
<dbReference type="SMART" id="SM00382">
    <property type="entry name" value="AAA"/>
    <property type="match status" value="2"/>
</dbReference>
<dbReference type="SUPFAM" id="SSF90123">
    <property type="entry name" value="ABC transporter transmembrane region"/>
    <property type="match status" value="2"/>
</dbReference>
<dbReference type="SUPFAM" id="SSF52540">
    <property type="entry name" value="P-loop containing nucleoside triphosphate hydrolases"/>
    <property type="match status" value="2"/>
</dbReference>
<dbReference type="PROSITE" id="PS50929">
    <property type="entry name" value="ABC_TM1F"/>
    <property type="match status" value="2"/>
</dbReference>
<dbReference type="PROSITE" id="PS00211">
    <property type="entry name" value="ABC_TRANSPORTER_1"/>
    <property type="match status" value="2"/>
</dbReference>
<dbReference type="PROSITE" id="PS50893">
    <property type="entry name" value="ABC_TRANSPORTER_2"/>
    <property type="match status" value="2"/>
</dbReference>
<comment type="function">
    <text evidence="2 7 8 9 10">Mediates export of organic anions and drugs from the cytoplasm. Mediates ATP-dependent transport of glutathione and glutathione conjugates, leukotriene C4, estradiol-17-beta-o-glucuronide, methotrexate, antiviral drugs and other xenobiotics. Confers resistance to anticancer drugs by decreasing accumulation of drugs in cells, and by mediating ATP- and GSH-dependent drug export (PubMed:9281595, PubMed:9359705). Hydrolyzes ATP with low efficiency. Catalyzes the export of sphingosine 1-phosphate from mast cells independently of their degranulation (By similarity). Participates in inflammatory response by allowing export of leukotriene C4 from leukotriene C4-synthesizing cells (PubMed:9359705). Mediates ATP-dependent, GSH-independent cyclic GMP-AMP (cGAMP) export (PubMed:36070769). Thus, by limiting intracellular cGAMP concentrations negatively regulates the cGAS-STING pathway (PubMed:36070769). Exports S-geranylgeranyl-glutathione (GGG) in lymphoid cells and stromal compartments of lymphoid organs. ABCC1 (via extracellular transport) with GGT5 (via GGG catabolism) establish GGG gradients within lymphoid tissues to position P2RY8-positive lymphocytes at germinal centers in lymphoid follicles and restrict their chemotactic transmigration from blood vessels to the bone marrow parenchyma (PubMed:34088745). Mediates basolateral export of GSH-conjugated R- and S-prostaglandin A2 diastereomers in polarized epithelial cells (By similarity).</text>
</comment>
<comment type="catalytic activity">
    <reaction evidence="10">
        <text>ATP + H2O + xenobioticSide 1 = ADP + phosphate + xenobioticSide 2.</text>
        <dbReference type="EC" id="7.6.2.2"/>
    </reaction>
</comment>
<comment type="catalytic activity">
    <reaction evidence="10">
        <text>an S-substituted glutathione(in) + ATP + H2O = an S-substituted glutathione(out) + ADP + phosphate + H(+)</text>
        <dbReference type="Rhea" id="RHEA:19121"/>
        <dbReference type="ChEBI" id="CHEBI:15377"/>
        <dbReference type="ChEBI" id="CHEBI:15378"/>
        <dbReference type="ChEBI" id="CHEBI:30616"/>
        <dbReference type="ChEBI" id="CHEBI:43474"/>
        <dbReference type="ChEBI" id="CHEBI:90779"/>
        <dbReference type="ChEBI" id="CHEBI:456216"/>
        <dbReference type="EC" id="7.6.2.3"/>
    </reaction>
    <physiologicalReaction direction="left-to-right" evidence="10">
        <dbReference type="Rhea" id="RHEA:19122"/>
    </physiologicalReaction>
</comment>
<comment type="catalytic activity">
    <reaction evidence="9 10">
        <text>leukotriene C4(in) + ATP + H2O = leukotriene C4(out) + ADP + phosphate + H(+)</text>
        <dbReference type="Rhea" id="RHEA:38963"/>
        <dbReference type="ChEBI" id="CHEBI:15377"/>
        <dbReference type="ChEBI" id="CHEBI:15378"/>
        <dbReference type="ChEBI" id="CHEBI:30616"/>
        <dbReference type="ChEBI" id="CHEBI:43474"/>
        <dbReference type="ChEBI" id="CHEBI:57973"/>
        <dbReference type="ChEBI" id="CHEBI:456216"/>
    </reaction>
    <physiologicalReaction direction="left-to-right" evidence="9">
        <dbReference type="Rhea" id="RHEA:38964"/>
    </physiologicalReaction>
</comment>
<comment type="catalytic activity">
    <reaction evidence="2">
        <text>sphing-4-enine 1-phosphate(in) + ATP + H2O = sphing-4-enine 1-phosphate(out) + ADP + phosphate + H(+)</text>
        <dbReference type="Rhea" id="RHEA:38951"/>
        <dbReference type="ChEBI" id="CHEBI:15377"/>
        <dbReference type="ChEBI" id="CHEBI:15378"/>
        <dbReference type="ChEBI" id="CHEBI:30616"/>
        <dbReference type="ChEBI" id="CHEBI:43474"/>
        <dbReference type="ChEBI" id="CHEBI:60119"/>
        <dbReference type="ChEBI" id="CHEBI:456216"/>
    </reaction>
    <physiologicalReaction direction="left-to-right" evidence="2">
        <dbReference type="Rhea" id="RHEA:38952"/>
    </physiologicalReaction>
</comment>
<comment type="catalytic activity">
    <reaction evidence="2">
        <text>17beta-estradiol 17-O-(beta-D-glucuronate)(in) + ATP + H2O = 17beta-estradiol 17-O-(beta-D-glucuronate)(out) + ADP + phosphate + H(+)</text>
        <dbReference type="Rhea" id="RHEA:60128"/>
        <dbReference type="ChEBI" id="CHEBI:15377"/>
        <dbReference type="ChEBI" id="CHEBI:15378"/>
        <dbReference type="ChEBI" id="CHEBI:30616"/>
        <dbReference type="ChEBI" id="CHEBI:43474"/>
        <dbReference type="ChEBI" id="CHEBI:82961"/>
        <dbReference type="ChEBI" id="CHEBI:456216"/>
    </reaction>
    <physiologicalReaction direction="left-to-right" evidence="2">
        <dbReference type="Rhea" id="RHEA:60129"/>
    </physiologicalReaction>
</comment>
<comment type="catalytic activity">
    <reaction evidence="9">
        <text>vincristine(in) + ATP + H2O = vincristine(out) + ADP + phosphate + H(+)</text>
        <dbReference type="Rhea" id="RHEA:60160"/>
        <dbReference type="ChEBI" id="CHEBI:15377"/>
        <dbReference type="ChEBI" id="CHEBI:15378"/>
        <dbReference type="ChEBI" id="CHEBI:30616"/>
        <dbReference type="ChEBI" id="CHEBI:43474"/>
        <dbReference type="ChEBI" id="CHEBI:143658"/>
        <dbReference type="ChEBI" id="CHEBI:456216"/>
    </reaction>
    <physiologicalReaction direction="left-to-right" evidence="9">
        <dbReference type="Rhea" id="RHEA:60161"/>
    </physiologicalReaction>
</comment>
<comment type="catalytic activity">
    <reaction evidence="2">
        <text>daunorubicin(in) + ATP + H2O = daunorubicin(out) + ADP + phosphate + H(+)</text>
        <dbReference type="Rhea" id="RHEA:33147"/>
        <dbReference type="ChEBI" id="CHEBI:15377"/>
        <dbReference type="ChEBI" id="CHEBI:15378"/>
        <dbReference type="ChEBI" id="CHEBI:30616"/>
        <dbReference type="ChEBI" id="CHEBI:43474"/>
        <dbReference type="ChEBI" id="CHEBI:64677"/>
        <dbReference type="ChEBI" id="CHEBI:456216"/>
    </reaction>
    <physiologicalReaction direction="left-to-right" evidence="2">
        <dbReference type="Rhea" id="RHEA:33148"/>
    </physiologicalReaction>
</comment>
<comment type="catalytic activity">
    <reaction evidence="8">
        <text>2',3'-cGAMP(in) + ATP + H2O = 2',3'-cGAMP(out) + ADP + phosphate + H(+)</text>
        <dbReference type="Rhea" id="RHEA:74887"/>
        <dbReference type="ChEBI" id="CHEBI:15377"/>
        <dbReference type="ChEBI" id="CHEBI:15378"/>
        <dbReference type="ChEBI" id="CHEBI:30616"/>
        <dbReference type="ChEBI" id="CHEBI:43474"/>
        <dbReference type="ChEBI" id="CHEBI:143093"/>
        <dbReference type="ChEBI" id="CHEBI:456216"/>
    </reaction>
</comment>
<comment type="catalytic activity">
    <reaction evidence="7">
        <text>S-[(2E,6E,10E)-geranylgeranyl]-L-glutathione(in) + ATP + H2O = S-[(2E,6E,10E)-geranylgeranyl]-L-glutathione(out) + ADP + phosphate + H(+)</text>
        <dbReference type="Rhea" id="RHEA:81611"/>
        <dbReference type="ChEBI" id="CHEBI:15377"/>
        <dbReference type="ChEBI" id="CHEBI:15378"/>
        <dbReference type="ChEBI" id="CHEBI:30616"/>
        <dbReference type="ChEBI" id="CHEBI:43474"/>
        <dbReference type="ChEBI" id="CHEBI:156326"/>
        <dbReference type="ChEBI" id="CHEBI:456216"/>
    </reaction>
    <physiologicalReaction direction="left-to-right" evidence="12">
        <dbReference type="Rhea" id="RHEA:81612"/>
    </physiologicalReaction>
</comment>
<comment type="catalytic activity">
    <reaction evidence="2">
        <text>prostaglandin A2-S-(R)-glutathione(in) + ATP + H2O = prostaglandin A2-S-(R)-glutathione(out) + ADP + phosphate + H(+)</text>
        <dbReference type="Rhea" id="RHEA:81695"/>
        <dbReference type="ChEBI" id="CHEBI:15377"/>
        <dbReference type="ChEBI" id="CHEBI:15378"/>
        <dbReference type="ChEBI" id="CHEBI:30616"/>
        <dbReference type="ChEBI" id="CHEBI:43474"/>
        <dbReference type="ChEBI" id="CHEBI:133768"/>
        <dbReference type="ChEBI" id="CHEBI:456216"/>
    </reaction>
    <physiologicalReaction direction="left-to-right" evidence="2">
        <dbReference type="Rhea" id="RHEA:81696"/>
    </physiologicalReaction>
</comment>
<comment type="catalytic activity">
    <reaction evidence="2">
        <text>prostaglandin A2-S-(S)-glutathione(in) + ATP + H2O = prostaglandin A2-S-(S)-glutathione(out) + ADP + phosphate + H(+)</text>
        <dbReference type="Rhea" id="RHEA:81699"/>
        <dbReference type="ChEBI" id="CHEBI:15377"/>
        <dbReference type="ChEBI" id="CHEBI:15378"/>
        <dbReference type="ChEBI" id="CHEBI:30616"/>
        <dbReference type="ChEBI" id="CHEBI:43474"/>
        <dbReference type="ChEBI" id="CHEBI:133769"/>
        <dbReference type="ChEBI" id="CHEBI:456216"/>
    </reaction>
    <physiologicalReaction direction="left-to-right" evidence="2">
        <dbReference type="Rhea" id="RHEA:81700"/>
    </physiologicalReaction>
</comment>
<comment type="activity regulation">
    <text evidence="2">MK 571 inhibits sphingosine 1-phosphate and leukotriene C4 export.</text>
</comment>
<comment type="biophysicochemical properties">
    <kinetics>
        <KM evidence="9">60 nM for leukotriene C4</KM>
        <KM evidence="10">3.3 nM for S-(2,4-dinitrophenyl)glutathione</KM>
        <Vmax evidence="9">350.0 pmol/min/mg enzyme for leukotriene C4 transport</Vmax>
    </kinetics>
</comment>
<comment type="subcellular location">
    <subcellularLocation>
        <location evidence="2">Cell membrane</location>
        <topology evidence="3">Multi-pass membrane protein</topology>
    </subcellularLocation>
    <subcellularLocation>
        <location evidence="2">Basolateral cell membrane</location>
        <topology evidence="3">Multi-pass membrane protein</topology>
    </subcellularLocation>
</comment>
<comment type="disruption phenotype">
    <text evidence="10">Homozygous ABCC1 knockout mice are healthy and fertile up to at least 12 months of age. They are hypersensitive to anticancer drugs resulting in an increased loss of body weight and mortality and have a decreased inflammatory response.</text>
</comment>
<comment type="similarity">
    <text evidence="11">Belongs to the ABC transporter superfamily. ABCC family. Conjugate transporter (TC 3.A.1.208) subfamily.</text>
</comment>
<accession>O35379</accession>